<gene>
    <name evidence="1" type="primary">nadD</name>
    <name type="ordered locus">R03162</name>
    <name type="ORF">SMc03778</name>
</gene>
<dbReference type="EC" id="2.7.7.18" evidence="1"/>
<dbReference type="EMBL" id="AL591688">
    <property type="protein sequence ID" value="CAC47741.1"/>
    <property type="molecule type" value="Genomic_DNA"/>
</dbReference>
<dbReference type="RefSeq" id="NP_387268.2">
    <property type="nucleotide sequence ID" value="NC_003047.1"/>
</dbReference>
<dbReference type="SMR" id="Q92LB1"/>
<dbReference type="EnsemblBacteria" id="CAC47741">
    <property type="protein sequence ID" value="CAC47741"/>
    <property type="gene ID" value="SMc03778"/>
</dbReference>
<dbReference type="KEGG" id="sme:SMc03778"/>
<dbReference type="PATRIC" id="fig|266834.11.peg.4710"/>
<dbReference type="eggNOG" id="COG1057">
    <property type="taxonomic scope" value="Bacteria"/>
</dbReference>
<dbReference type="OrthoDB" id="5295945at2"/>
<dbReference type="UniPathway" id="UPA00253">
    <property type="reaction ID" value="UER00332"/>
</dbReference>
<dbReference type="Proteomes" id="UP000001976">
    <property type="component" value="Chromosome"/>
</dbReference>
<dbReference type="GO" id="GO:0005524">
    <property type="term" value="F:ATP binding"/>
    <property type="evidence" value="ECO:0007669"/>
    <property type="project" value="UniProtKB-KW"/>
</dbReference>
<dbReference type="GO" id="GO:0004515">
    <property type="term" value="F:nicotinate-nucleotide adenylyltransferase activity"/>
    <property type="evidence" value="ECO:0007669"/>
    <property type="project" value="UniProtKB-UniRule"/>
</dbReference>
<dbReference type="GO" id="GO:0009435">
    <property type="term" value="P:NAD biosynthetic process"/>
    <property type="evidence" value="ECO:0007669"/>
    <property type="project" value="UniProtKB-UniRule"/>
</dbReference>
<dbReference type="CDD" id="cd02165">
    <property type="entry name" value="NMNAT"/>
    <property type="match status" value="1"/>
</dbReference>
<dbReference type="Gene3D" id="3.40.50.620">
    <property type="entry name" value="HUPs"/>
    <property type="match status" value="1"/>
</dbReference>
<dbReference type="HAMAP" id="MF_00244">
    <property type="entry name" value="NaMN_adenylyltr"/>
    <property type="match status" value="1"/>
</dbReference>
<dbReference type="InterPro" id="IPR004821">
    <property type="entry name" value="Cyt_trans-like"/>
</dbReference>
<dbReference type="InterPro" id="IPR005248">
    <property type="entry name" value="NadD/NMNAT"/>
</dbReference>
<dbReference type="InterPro" id="IPR014729">
    <property type="entry name" value="Rossmann-like_a/b/a_fold"/>
</dbReference>
<dbReference type="NCBIfam" id="TIGR00482">
    <property type="entry name" value="nicotinate (nicotinamide) nucleotide adenylyltransferase"/>
    <property type="match status" value="1"/>
</dbReference>
<dbReference type="NCBIfam" id="NF000843">
    <property type="entry name" value="PRK00071.2-2"/>
    <property type="match status" value="1"/>
</dbReference>
<dbReference type="NCBIfam" id="NF000845">
    <property type="entry name" value="PRK00071.2-4"/>
    <property type="match status" value="1"/>
</dbReference>
<dbReference type="PANTHER" id="PTHR39321">
    <property type="entry name" value="NICOTINATE-NUCLEOTIDE ADENYLYLTRANSFERASE-RELATED"/>
    <property type="match status" value="1"/>
</dbReference>
<dbReference type="PANTHER" id="PTHR39321:SF3">
    <property type="entry name" value="PHOSPHOPANTETHEINE ADENYLYLTRANSFERASE"/>
    <property type="match status" value="1"/>
</dbReference>
<dbReference type="Pfam" id="PF01467">
    <property type="entry name" value="CTP_transf_like"/>
    <property type="match status" value="1"/>
</dbReference>
<dbReference type="SUPFAM" id="SSF52374">
    <property type="entry name" value="Nucleotidylyl transferase"/>
    <property type="match status" value="1"/>
</dbReference>
<sequence length="188" mass="20879">MAVGLFGGSFNPPHDGHALVAETALRRLGLDQLWWMVTPGNPLKDRNHLAPLGERIAMSEKIARNPRIKVTAFEQALGQSYTARTLEVIRARNRDVRFVWVMGADNLKNFHRWQDWRKIVATFPIAVVDRPGSTLAYLSSPMARAFSSARVDEDDAGTLAFRRAPAWTFIHGPRSGLSSTALRSAKSG</sequence>
<reference key="1">
    <citation type="journal article" date="2001" name="Proc. Natl. Acad. Sci. U.S.A.">
        <title>Analysis of the chromosome sequence of the legume symbiont Sinorhizobium meliloti strain 1021.</title>
        <authorList>
            <person name="Capela D."/>
            <person name="Barloy-Hubler F."/>
            <person name="Gouzy J."/>
            <person name="Bothe G."/>
            <person name="Ampe F."/>
            <person name="Batut J."/>
            <person name="Boistard P."/>
            <person name="Becker A."/>
            <person name="Boutry M."/>
            <person name="Cadieu E."/>
            <person name="Dreano S."/>
            <person name="Gloux S."/>
            <person name="Godrie T."/>
            <person name="Goffeau A."/>
            <person name="Kahn D."/>
            <person name="Kiss E."/>
            <person name="Lelaure V."/>
            <person name="Masuy D."/>
            <person name="Pohl T."/>
            <person name="Portetelle D."/>
            <person name="Puehler A."/>
            <person name="Purnelle B."/>
            <person name="Ramsperger U."/>
            <person name="Renard C."/>
            <person name="Thebault P."/>
            <person name="Vandenbol M."/>
            <person name="Weidner S."/>
            <person name="Galibert F."/>
        </authorList>
    </citation>
    <scope>NUCLEOTIDE SEQUENCE [LARGE SCALE GENOMIC DNA]</scope>
    <source>
        <strain>1021</strain>
    </source>
</reference>
<reference key="2">
    <citation type="journal article" date="2001" name="Science">
        <title>The composite genome of the legume symbiont Sinorhizobium meliloti.</title>
        <authorList>
            <person name="Galibert F."/>
            <person name="Finan T.M."/>
            <person name="Long S.R."/>
            <person name="Puehler A."/>
            <person name="Abola P."/>
            <person name="Ampe F."/>
            <person name="Barloy-Hubler F."/>
            <person name="Barnett M.J."/>
            <person name="Becker A."/>
            <person name="Boistard P."/>
            <person name="Bothe G."/>
            <person name="Boutry M."/>
            <person name="Bowser L."/>
            <person name="Buhrmester J."/>
            <person name="Cadieu E."/>
            <person name="Capela D."/>
            <person name="Chain P."/>
            <person name="Cowie A."/>
            <person name="Davis R.W."/>
            <person name="Dreano S."/>
            <person name="Federspiel N.A."/>
            <person name="Fisher R.F."/>
            <person name="Gloux S."/>
            <person name="Godrie T."/>
            <person name="Goffeau A."/>
            <person name="Golding B."/>
            <person name="Gouzy J."/>
            <person name="Gurjal M."/>
            <person name="Hernandez-Lucas I."/>
            <person name="Hong A."/>
            <person name="Huizar L."/>
            <person name="Hyman R.W."/>
            <person name="Jones T."/>
            <person name="Kahn D."/>
            <person name="Kahn M.L."/>
            <person name="Kalman S."/>
            <person name="Keating D.H."/>
            <person name="Kiss E."/>
            <person name="Komp C."/>
            <person name="Lelaure V."/>
            <person name="Masuy D."/>
            <person name="Palm C."/>
            <person name="Peck M.C."/>
            <person name="Pohl T.M."/>
            <person name="Portetelle D."/>
            <person name="Purnelle B."/>
            <person name="Ramsperger U."/>
            <person name="Surzycki R."/>
            <person name="Thebault P."/>
            <person name="Vandenbol M."/>
            <person name="Vorhoelter F.J."/>
            <person name="Weidner S."/>
            <person name="Wells D.H."/>
            <person name="Wong K."/>
            <person name="Yeh K.-C."/>
            <person name="Batut J."/>
        </authorList>
    </citation>
    <scope>NUCLEOTIDE SEQUENCE [LARGE SCALE GENOMIC DNA]</scope>
    <source>
        <strain>1021</strain>
    </source>
</reference>
<protein>
    <recommendedName>
        <fullName evidence="1">Probable nicotinate-nucleotide adenylyltransferase</fullName>
        <ecNumber evidence="1">2.7.7.18</ecNumber>
    </recommendedName>
    <alternativeName>
        <fullName evidence="1">Deamido-NAD(+) diphosphorylase</fullName>
    </alternativeName>
    <alternativeName>
        <fullName evidence="1">Deamido-NAD(+) pyrophosphorylase</fullName>
    </alternativeName>
    <alternativeName>
        <fullName evidence="1">Nicotinate mononucleotide adenylyltransferase</fullName>
        <shortName evidence="1">NaMN adenylyltransferase</shortName>
    </alternativeName>
</protein>
<accession>Q92LB1</accession>
<keyword id="KW-0067">ATP-binding</keyword>
<keyword id="KW-0520">NAD</keyword>
<keyword id="KW-0547">Nucleotide-binding</keyword>
<keyword id="KW-0548">Nucleotidyltransferase</keyword>
<keyword id="KW-0662">Pyridine nucleotide biosynthesis</keyword>
<keyword id="KW-1185">Reference proteome</keyword>
<keyword id="KW-0808">Transferase</keyword>
<comment type="function">
    <text evidence="1">Catalyzes the reversible adenylation of nicotinate mononucleotide (NaMN) to nicotinic acid adenine dinucleotide (NaAD).</text>
</comment>
<comment type="catalytic activity">
    <reaction evidence="1">
        <text>nicotinate beta-D-ribonucleotide + ATP + H(+) = deamido-NAD(+) + diphosphate</text>
        <dbReference type="Rhea" id="RHEA:22860"/>
        <dbReference type="ChEBI" id="CHEBI:15378"/>
        <dbReference type="ChEBI" id="CHEBI:30616"/>
        <dbReference type="ChEBI" id="CHEBI:33019"/>
        <dbReference type="ChEBI" id="CHEBI:57502"/>
        <dbReference type="ChEBI" id="CHEBI:58437"/>
        <dbReference type="EC" id="2.7.7.18"/>
    </reaction>
</comment>
<comment type="pathway">
    <text evidence="1">Cofactor biosynthesis; NAD(+) biosynthesis; deamido-NAD(+) from nicotinate D-ribonucleotide: step 1/1.</text>
</comment>
<comment type="similarity">
    <text evidence="1">Belongs to the NadD family.</text>
</comment>
<evidence type="ECO:0000255" key="1">
    <source>
        <dbReference type="HAMAP-Rule" id="MF_00244"/>
    </source>
</evidence>
<name>NADD_RHIME</name>
<proteinExistence type="inferred from homology"/>
<feature type="chain" id="PRO_0000310134" description="Probable nicotinate-nucleotide adenylyltransferase">
    <location>
        <begin position="1"/>
        <end position="188"/>
    </location>
</feature>
<organism>
    <name type="scientific">Rhizobium meliloti (strain 1021)</name>
    <name type="common">Ensifer meliloti</name>
    <name type="synonym">Sinorhizobium meliloti</name>
    <dbReference type="NCBI Taxonomy" id="266834"/>
    <lineage>
        <taxon>Bacteria</taxon>
        <taxon>Pseudomonadati</taxon>
        <taxon>Pseudomonadota</taxon>
        <taxon>Alphaproteobacteria</taxon>
        <taxon>Hyphomicrobiales</taxon>
        <taxon>Rhizobiaceae</taxon>
        <taxon>Sinorhizobium/Ensifer group</taxon>
        <taxon>Sinorhizobium</taxon>
    </lineage>
</organism>